<gene>
    <name type="primary">Guca2b</name>
</gene>
<sequence>MSRSQLWAAVVLLLLLQSAQGVYIKYHGFQVQLESVKKLNELEEKEMSNPQPRRSGLLPAVCHNPALPLDLQPVCASQEAASTFKALRTIATDECELCINVACTGC</sequence>
<protein>
    <recommendedName>
        <fullName>Guanylate cyclase activator 2B</fullName>
    </recommendedName>
    <component>
        <recommendedName>
            <fullName>Uroguanylin</fullName>
            <shortName>UGN</shortName>
        </recommendedName>
    </component>
</protein>
<comment type="function">
    <text evidence="1">Endogenous activator of intestinal guanylate cyclase. It stimulates this enzyme through the same receptor binding region as the heat-stable enterotoxins. May be a potent physiological regulator of intestinal fluid and electrolyte transport. May be an autocrine/paracrine regulator of intestinal salt and water transport (By similarity).</text>
</comment>
<comment type="subcellular location">
    <subcellularLocation>
        <location>Secreted</location>
    </subcellularLocation>
</comment>
<comment type="tissue specificity">
    <text>Localized predominantly in intestinal villi and the corticomedullary junction of the kidney.</text>
</comment>
<comment type="similarity">
    <text evidence="3">Belongs to the guanylin family.</text>
</comment>
<organism>
    <name type="scientific">Mus musculus</name>
    <name type="common">Mouse</name>
    <dbReference type="NCBI Taxonomy" id="10090"/>
    <lineage>
        <taxon>Eukaryota</taxon>
        <taxon>Metazoa</taxon>
        <taxon>Chordata</taxon>
        <taxon>Craniata</taxon>
        <taxon>Vertebrata</taxon>
        <taxon>Euteleostomi</taxon>
        <taxon>Mammalia</taxon>
        <taxon>Eutheria</taxon>
        <taxon>Euarchontoglires</taxon>
        <taxon>Glires</taxon>
        <taxon>Rodentia</taxon>
        <taxon>Myomorpha</taxon>
        <taxon>Muroidea</taxon>
        <taxon>Muridae</taxon>
        <taxon>Murinae</taxon>
        <taxon>Mus</taxon>
        <taxon>Mus</taxon>
    </lineage>
</organism>
<feature type="signal peptide" evidence="2">
    <location>
        <begin position="1"/>
        <end position="21"/>
    </location>
</feature>
<feature type="propeptide" id="PRO_0000013150">
    <location>
        <begin position="22"/>
        <end position="91"/>
    </location>
</feature>
<feature type="peptide" id="PRO_0000013151" description="Uroguanylin">
    <location>
        <begin position="92"/>
        <end position="106"/>
    </location>
</feature>
<feature type="disulfide bond" evidence="1">
    <location>
        <begin position="62"/>
        <end position="75"/>
    </location>
</feature>
<feature type="disulfide bond" evidence="1">
    <location>
        <begin position="95"/>
        <end position="103"/>
    </location>
</feature>
<feature type="disulfide bond" evidence="1">
    <location>
        <begin position="98"/>
        <end position="106"/>
    </location>
</feature>
<feature type="sequence conflict" description="In Ref. 1; AAB53314." evidence="3" ref="1">
    <original>Q</original>
    <variation>R</variation>
    <location>
        <position position="17"/>
    </location>
</feature>
<keyword id="KW-1015">Disulfide bond</keyword>
<keyword id="KW-1185">Reference proteome</keyword>
<keyword id="KW-0964">Secreted</keyword>
<keyword id="KW-0732">Signal</keyword>
<name>GUC2B_MOUSE</name>
<accession>O09051</accession>
<dbReference type="EMBL" id="U95182">
    <property type="protein sequence ID" value="AAB82750.2"/>
    <property type="molecule type" value="Genomic_DNA"/>
</dbReference>
<dbReference type="EMBL" id="U90727">
    <property type="protein sequence ID" value="AAB53314.1"/>
    <property type="molecule type" value="mRNA"/>
</dbReference>
<dbReference type="CCDS" id="CCDS18587.1"/>
<dbReference type="RefSeq" id="NP_032217.2">
    <property type="nucleotide sequence ID" value="NM_008191.2"/>
</dbReference>
<dbReference type="SMR" id="O09051"/>
<dbReference type="FunCoup" id="O09051">
    <property type="interactions" value="22"/>
</dbReference>
<dbReference type="STRING" id="10090.ENSMUSP00000043203"/>
<dbReference type="PaxDb" id="10090-ENSMUSP00000043203"/>
<dbReference type="PeptideAtlas" id="O09051"/>
<dbReference type="ProteomicsDB" id="269846"/>
<dbReference type="Antibodypedia" id="18083">
    <property type="antibodies" value="182 antibodies from 25 providers"/>
</dbReference>
<dbReference type="DNASU" id="14916"/>
<dbReference type="Ensembl" id="ENSMUST00000044426.8">
    <property type="protein sequence ID" value="ENSMUSP00000043203.8"/>
    <property type="gene ID" value="ENSMUSG00000032978.15"/>
</dbReference>
<dbReference type="GeneID" id="14916"/>
<dbReference type="KEGG" id="mmu:14916"/>
<dbReference type="UCSC" id="uc012dkg.1">
    <property type="organism name" value="mouse"/>
</dbReference>
<dbReference type="AGR" id="MGI:1270851"/>
<dbReference type="CTD" id="2981"/>
<dbReference type="MGI" id="MGI:1270851">
    <property type="gene designation" value="Guca2b"/>
</dbReference>
<dbReference type="VEuPathDB" id="HostDB:ENSMUSG00000032978"/>
<dbReference type="eggNOG" id="ENOG502S7QR">
    <property type="taxonomic scope" value="Eukaryota"/>
</dbReference>
<dbReference type="GeneTree" id="ENSGT00940000154436"/>
<dbReference type="HOGENOM" id="CLU_166952_1_0_1"/>
<dbReference type="InParanoid" id="O09051"/>
<dbReference type="OMA" id="ITPLDPC"/>
<dbReference type="OrthoDB" id="71581at9989"/>
<dbReference type="TreeFam" id="TF330731"/>
<dbReference type="Reactome" id="R-MMU-8935690">
    <property type="pathway name" value="Digestion"/>
</dbReference>
<dbReference type="BioGRID-ORCS" id="14916">
    <property type="hits" value="1 hit in 76 CRISPR screens"/>
</dbReference>
<dbReference type="PRO" id="PR:O09051"/>
<dbReference type="Proteomes" id="UP000000589">
    <property type="component" value="Chromosome 4"/>
</dbReference>
<dbReference type="RNAct" id="O09051">
    <property type="molecule type" value="protein"/>
</dbReference>
<dbReference type="Bgee" id="ENSMUSG00000032978">
    <property type="expression patterns" value="Expressed in small intestine Peyer's patch and 53 other cell types or tissues"/>
</dbReference>
<dbReference type="ExpressionAtlas" id="O09051">
    <property type="expression patterns" value="baseline and differential"/>
</dbReference>
<dbReference type="GO" id="GO:0005576">
    <property type="term" value="C:extracellular region"/>
    <property type="evidence" value="ECO:0007669"/>
    <property type="project" value="UniProtKB-SubCell"/>
</dbReference>
<dbReference type="GO" id="GO:0030250">
    <property type="term" value="F:guanylate cyclase activator activity"/>
    <property type="evidence" value="ECO:0007669"/>
    <property type="project" value="InterPro"/>
</dbReference>
<dbReference type="GO" id="GO:0060612">
    <property type="term" value="P:adipose tissue development"/>
    <property type="evidence" value="ECO:0000315"/>
    <property type="project" value="MGI"/>
</dbReference>
<dbReference type="GO" id="GO:0007589">
    <property type="term" value="P:body fluid secretion"/>
    <property type="evidence" value="ECO:0000315"/>
    <property type="project" value="MGI"/>
</dbReference>
<dbReference type="GO" id="GO:0019934">
    <property type="term" value="P:cGMP-mediated signaling"/>
    <property type="evidence" value="ECO:0007669"/>
    <property type="project" value="Ensembl"/>
</dbReference>
<dbReference type="GO" id="GO:0097009">
    <property type="term" value="P:energy homeostasis"/>
    <property type="evidence" value="ECO:0000315"/>
    <property type="project" value="MGI"/>
</dbReference>
<dbReference type="GO" id="GO:0042593">
    <property type="term" value="P:glucose homeostasis"/>
    <property type="evidence" value="ECO:0000315"/>
    <property type="project" value="MGI"/>
</dbReference>
<dbReference type="GO" id="GO:0035264">
    <property type="term" value="P:multicellular organism growth"/>
    <property type="evidence" value="ECO:0000315"/>
    <property type="project" value="MGI"/>
</dbReference>
<dbReference type="GO" id="GO:0045776">
    <property type="term" value="P:negative regulation of blood pressure"/>
    <property type="evidence" value="ECO:0000315"/>
    <property type="project" value="MGI"/>
</dbReference>
<dbReference type="GO" id="GO:0002023">
    <property type="term" value="P:reduction of food intake in response to dietary excess"/>
    <property type="evidence" value="ECO:0000315"/>
    <property type="project" value="MGI"/>
</dbReference>
<dbReference type="GO" id="GO:0070294">
    <property type="term" value="P:renal sodium ion absorption"/>
    <property type="evidence" value="ECO:0000315"/>
    <property type="project" value="MGI"/>
</dbReference>
<dbReference type="GO" id="GO:0009749">
    <property type="term" value="P:response to glucose"/>
    <property type="evidence" value="ECO:0000315"/>
    <property type="project" value="MGI"/>
</dbReference>
<dbReference type="FunFam" id="3.90.1450.10:FF:000001">
    <property type="entry name" value="Guanylate cyclase activator 2B"/>
    <property type="match status" value="1"/>
</dbReference>
<dbReference type="Gene3D" id="3.90.1450.10">
    <property type="entry name" value="Guanylin"/>
    <property type="match status" value="1"/>
</dbReference>
<dbReference type="InterPro" id="IPR000879">
    <property type="entry name" value="Guanylin"/>
</dbReference>
<dbReference type="InterPro" id="IPR036382">
    <property type="entry name" value="Guanylin_sf"/>
</dbReference>
<dbReference type="PANTHER" id="PTHR11318:SF4">
    <property type="entry name" value="GUANYLATE CYCLASE ACTIVATOR 2B"/>
    <property type="match status" value="1"/>
</dbReference>
<dbReference type="PANTHER" id="PTHR11318">
    <property type="entry name" value="GUANYLIN FAMILY MEMBER"/>
    <property type="match status" value="1"/>
</dbReference>
<dbReference type="Pfam" id="PF02058">
    <property type="entry name" value="Guanylin"/>
    <property type="match status" value="1"/>
</dbReference>
<dbReference type="PIRSF" id="PIRSF001849">
    <property type="entry name" value="Guanylin"/>
    <property type="match status" value="1"/>
</dbReference>
<dbReference type="PRINTS" id="PR00774">
    <property type="entry name" value="GUANYLIN"/>
</dbReference>
<dbReference type="SUPFAM" id="SSF89890">
    <property type="entry name" value="Proguanylin"/>
    <property type="match status" value="1"/>
</dbReference>
<reference key="1">
    <citation type="journal article" date="1997" name="Gastroenterology">
        <title>Uroguanylin and guanylin: distinct but overlapping patterns of messenger RNA expression in mouse intestine.</title>
        <authorList>
            <person name="Whitaker T.L."/>
            <person name="Witte D.P."/>
            <person name="Scott M.C."/>
            <person name="Cohen M.B."/>
        </authorList>
    </citation>
    <scope>NUCLEOTIDE SEQUENCE [GENOMIC DNA / MRNA]</scope>
</reference>
<reference key="2">
    <citation type="submission" date="2000-02" db="EMBL/GenBank/DDBJ databases">
        <authorList>
            <person name="Sanford L.P."/>
            <person name="Cohen M.B."/>
        </authorList>
    </citation>
    <scope>SEQUENCE REVISION TO 17</scope>
</reference>
<reference key="3">
    <citation type="journal article" date="2010" name="Cell">
        <title>A tissue-specific atlas of mouse protein phosphorylation and expression.</title>
        <authorList>
            <person name="Huttlin E.L."/>
            <person name="Jedrychowski M.P."/>
            <person name="Elias J.E."/>
            <person name="Goswami T."/>
            <person name="Rad R."/>
            <person name="Beausoleil S.A."/>
            <person name="Villen J."/>
            <person name="Haas W."/>
            <person name="Sowa M.E."/>
            <person name="Gygi S.P."/>
        </authorList>
    </citation>
    <scope>IDENTIFICATION BY MASS SPECTROMETRY [LARGE SCALE ANALYSIS]</scope>
    <source>
        <tissue>Kidney</tissue>
    </source>
</reference>
<proteinExistence type="evidence at protein level"/>
<evidence type="ECO:0000250" key="1"/>
<evidence type="ECO:0000255" key="2"/>
<evidence type="ECO:0000305" key="3"/>